<organism>
    <name type="scientific">Rattus norvegicus</name>
    <name type="common">Rat</name>
    <dbReference type="NCBI Taxonomy" id="10116"/>
    <lineage>
        <taxon>Eukaryota</taxon>
        <taxon>Metazoa</taxon>
        <taxon>Chordata</taxon>
        <taxon>Craniata</taxon>
        <taxon>Vertebrata</taxon>
        <taxon>Euteleostomi</taxon>
        <taxon>Mammalia</taxon>
        <taxon>Eutheria</taxon>
        <taxon>Euarchontoglires</taxon>
        <taxon>Glires</taxon>
        <taxon>Rodentia</taxon>
        <taxon>Myomorpha</taxon>
        <taxon>Muroidea</taxon>
        <taxon>Muridae</taxon>
        <taxon>Murinae</taxon>
        <taxon>Rattus</taxon>
    </lineage>
</organism>
<feature type="chain" id="PRO_0000125930" description="Heat shock protein beta-1">
    <location>
        <begin position="1"/>
        <end position="206"/>
    </location>
</feature>
<feature type="domain" description="sHSP" evidence="2">
    <location>
        <begin position="80"/>
        <end position="188"/>
    </location>
</feature>
<feature type="region of interest" description="Interaction with TGFB1I1" evidence="4">
    <location>
        <begin position="74"/>
        <end position="206"/>
    </location>
</feature>
<feature type="modified residue" description="Omega-N-methylarginine" evidence="1">
    <location>
        <position position="12"/>
    </location>
</feature>
<feature type="modified residue" description="Phosphoserine" evidence="8">
    <location>
        <position position="13"/>
    </location>
</feature>
<feature type="modified residue" description="Phosphoserine; by MAPKAPK2 and MAPKAPK3" evidence="6 8">
    <location>
        <position position="15"/>
    </location>
</feature>
<feature type="modified residue" description="Phosphoserine" evidence="7">
    <location>
        <position position="27"/>
    </location>
</feature>
<feature type="modified residue" description="Phosphoserine; by MAPKAPK2, MAPKAPK3 and MAPKAPK5" evidence="7 8">
    <location>
        <position position="86"/>
    </location>
</feature>
<feature type="modified residue" description="Phosphoserine" evidence="1">
    <location>
        <position position="87"/>
    </location>
</feature>
<feature type="modified residue" description="Phosphoserine" evidence="7">
    <location>
        <position position="90"/>
    </location>
</feature>
<feature type="modified residue" description="Phosphoserine" evidence="1">
    <location>
        <position position="102"/>
    </location>
</feature>
<feature type="modified residue" description="N6-acetyllysine" evidence="1">
    <location>
        <position position="127"/>
    </location>
</feature>
<feature type="modified residue" description="Phosphothreonine" evidence="1">
    <location>
        <position position="178"/>
    </location>
</feature>
<feature type="modified residue" description="Phosphoserine" evidence="1">
    <location>
        <position position="180"/>
    </location>
</feature>
<feature type="modified residue" description="Phosphoserine" evidence="1">
    <location>
        <position position="200"/>
    </location>
</feature>
<feature type="sequence conflict" description="In Ref. 3; AA sequence." evidence="6" ref="3">
    <original>S</original>
    <variation>A</variation>
    <location>
        <position position="49"/>
    </location>
</feature>
<feature type="sequence conflict" description="In Ref. 3; AA sequence." evidence="6" ref="3">
    <original>R</original>
    <variation>A</variation>
    <location>
        <position position="74"/>
    </location>
</feature>
<feature type="sequence conflict" description="In Ref. 2; AAB29536." evidence="6" ref="2">
    <location>
        <position position="76"/>
    </location>
</feature>
<accession>P42930</accession>
<accession>Q63922</accession>
<accession>Q9QWA8</accession>
<name>HSPB1_RAT</name>
<protein>
    <recommendedName>
        <fullName>Heat shock protein beta-1</fullName>
        <shortName>HspB1</shortName>
    </recommendedName>
    <alternativeName>
        <fullName>Heat shock 27 kDa protein</fullName>
        <shortName>HSP 27</shortName>
    </alternativeName>
</protein>
<keyword id="KW-0007">Acetylation</keyword>
<keyword id="KW-0143">Chaperone</keyword>
<keyword id="KW-0963">Cytoplasm</keyword>
<keyword id="KW-0206">Cytoskeleton</keyword>
<keyword id="KW-0903">Direct protein sequencing</keyword>
<keyword id="KW-0488">Methylation</keyword>
<keyword id="KW-0539">Nucleus</keyword>
<keyword id="KW-0597">Phosphoprotein</keyword>
<keyword id="KW-1185">Reference proteome</keyword>
<keyword id="KW-0346">Stress response</keyword>
<reference key="1">
    <citation type="journal article" date="1996" name="Biol. Reprod.">
        <title>Variation in expression of hsp27 messenger ribonucleic acid during the cycle of the seminiferous epithelium and co-localization of hsp27 and microfilaments in Sertoli cells of the rat.</title>
        <authorList>
            <person name="Welsh M.J."/>
            <person name="Wu W."/>
            <person name="Parvinen M."/>
            <person name="Gilmont R.R."/>
        </authorList>
    </citation>
    <scope>NUCLEOTIDE SEQUENCE [MRNA]</scope>
</reference>
<reference key="2">
    <citation type="journal article" date="1993" name="Biochem. Biophys. Res. Commun.">
        <title>Isolation and characterization of a rat HSP 27 gene.</title>
        <authorList>
            <person name="Uoshima K."/>
            <person name="Handelman B."/>
            <person name="Cooper L.F."/>
        </authorList>
    </citation>
    <scope>NUCLEOTIDE SEQUENCE [GENOMIC DNA]</scope>
    <source>
        <strain>Sprague-Dawley</strain>
    </source>
</reference>
<reference key="3">
    <citation type="journal article" date="1993" name="J. Biochem.">
        <title>Physiological and pathological changes in levels of the two small stress proteins, HSP27 and alpha B crystallin, in rat hindlimb muscles.</title>
        <authorList>
            <person name="Inaguma Y."/>
            <person name="Goto S."/>
            <person name="Shinohara H."/>
            <person name="Hasegawa K."/>
            <person name="Ohshima K."/>
            <person name="Kato K."/>
        </authorList>
    </citation>
    <scope>PROTEIN SEQUENCE OF 13-19; 21-31; 42-83; 104-123; 133-140 AND 190-206</scope>
    <scope>TISSUE SPECIFICITY</scope>
    <scope>DEVELOPMENTAL STAGE</scope>
    <source>
        <tissue>Skeletal muscle</tissue>
    </source>
</reference>
<reference key="4">
    <citation type="submission" date="2006-11" db="UniProtKB">
        <authorList>
            <person name="Lubec G."/>
            <person name="Afjehi-Sadat L."/>
        </authorList>
    </citation>
    <scope>PROTEIN SEQUENCE OF 29-38</scope>
    <scope>IDENTIFICATION BY MASS SPECTROMETRY</scope>
    <source>
        <strain>Sprague-Dawley</strain>
        <tissue>Spinal cord</tissue>
    </source>
</reference>
<reference key="5">
    <citation type="journal article" date="2000" name="J. Biol. Chem.">
        <title>Identification and characterization of a novel protein from Sertoli cells, PASS1, that associates with mammalian small stress protein hsp27.</title>
        <authorList>
            <person name="Liu C."/>
            <person name="Gilmont R.R."/>
            <person name="Benndorf R."/>
            <person name="Welsh M.J."/>
        </authorList>
    </citation>
    <scope>INTERACTION WITH HSPBAP1</scope>
</reference>
<reference key="6">
    <citation type="journal article" date="2001" name="J. Biol. Chem.">
        <title>Identification and characterization of hic-5/ARA55 as an hsp27 binding protein.</title>
        <authorList>
            <person name="Jia Y."/>
            <person name="Ransom R.F."/>
            <person name="Shibanuma M."/>
            <person name="Liu C."/>
            <person name="Welsh M.J."/>
            <person name="Smoyer W.E."/>
        </authorList>
    </citation>
    <scope>INTERACTION WITH TGFB1I1</scope>
</reference>
<reference key="7">
    <citation type="journal article" date="2006" name="Proc. Natl. Acad. Sci. U.S.A.">
        <title>Quantitative phosphoproteomics of vasopressin-sensitive renal cells: regulation of aquaporin-2 phosphorylation at two sites.</title>
        <authorList>
            <person name="Hoffert J.D."/>
            <person name="Pisitkun T."/>
            <person name="Wang G."/>
            <person name="Shen R.-F."/>
            <person name="Knepper M.A."/>
        </authorList>
    </citation>
    <scope>PHOSPHORYLATION [LARGE SCALE ANALYSIS] AT SER-27; SER-86 AND SER-90</scope>
    <scope>IDENTIFICATION BY MASS SPECTROMETRY [LARGE SCALE ANALYSIS]</scope>
</reference>
<reference key="8">
    <citation type="journal article" date="2012" name="Nat. Commun.">
        <title>Quantitative maps of protein phosphorylation sites across 14 different rat organs and tissues.</title>
        <authorList>
            <person name="Lundby A."/>
            <person name="Secher A."/>
            <person name="Lage K."/>
            <person name="Nordsborg N.B."/>
            <person name="Dmytriyev A."/>
            <person name="Lundby C."/>
            <person name="Olsen J.V."/>
        </authorList>
    </citation>
    <scope>PHOSPHORYLATION [LARGE SCALE ANALYSIS] AT SER-13; SER-15 AND SER-86</scope>
    <scope>IDENTIFICATION BY MASS SPECTROMETRY [LARGE SCALE ANALYSIS]</scope>
</reference>
<comment type="function">
    <text evidence="1">Small heat shock protein which functions as a molecular chaperone probably maintaining denatured proteins in a folding-competent state. Plays a role in stress resistance and actin organization. Through its molecular chaperone activity may regulate numerous biological processes including the phosphorylation and the axonal transport of neurofilament proteins.</text>
</comment>
<comment type="subunit">
    <text evidence="1 3 4">Homooligomer. Homodimer; becomes monomeric upon activation. Heterooligomer; with HSPB6. Associates with alpha- and beta-tubulin (By similarity). Interacts with TGFB1I1 (PubMed:11546764). Interacts with CRYAB (By similarity). Interacts with HSPB8 (By similarity). Interacts with HSPBAP1 (PubMed:10751411).</text>
</comment>
<comment type="subcellular location">
    <subcellularLocation>
        <location evidence="1">Cytoplasm</location>
    </subcellularLocation>
    <subcellularLocation>
        <location evidence="1">Nucleus</location>
    </subcellularLocation>
    <subcellularLocation>
        <location evidence="1">Cytoplasm</location>
        <location evidence="1">Cytoskeleton</location>
        <location evidence="1">Spindle</location>
    </subcellularLocation>
    <text evidence="1">Cytoplasmic in interphase cells. Colocalizes with mitotic spindles in mitotic cells. Translocates to the nucleus during heat shock and resides in sub-nuclear structures known as SC35 speckles or nuclear splicing speckles.</text>
</comment>
<comment type="tissue specificity">
    <text evidence="5">Expressed in a variety of tissues. High levels in lung, adrenal, xiphoid, adipose tissue, heart and striated and smooth muscle, lower levels in the CNS. Adult levels are much higher in the slow-twitch soleus muscle than in the fast-twitch rectus femoris and extensor digitorum muscles.</text>
</comment>
<comment type="developmental stage">
    <text evidence="5">Expressed in the soleus and rectus femoris muscles at prenatal day 2, increasing to a maximum at postnatal day 3. Expression in the rectus femoris muscle then decreases reaching adult levels within a few weeks.</text>
</comment>
<comment type="PTM">
    <text evidence="1">Phosphorylated upon exposure to protein kinase C activators and heat shock. Phosphorylation by MAPKAPK2 and MAPKAPK3 in response to stress dissociates HSPB1 from large small heat-shock protein (sHsps) oligomers and impairs its chaperone activity and ability to protect against oxidative stress effectively. Phosphorylation by MAPKAPK5 in response to PKA stimulation induces F-actin rearrangement.</text>
</comment>
<comment type="similarity">
    <text evidence="2">Belongs to the small heat shock protein (HSP20) family.</text>
</comment>
<dbReference type="EMBL" id="M86389">
    <property type="protein sequence ID" value="AAA41353.1"/>
    <property type="molecule type" value="mRNA"/>
</dbReference>
<dbReference type="EMBL" id="S67755">
    <property type="protein sequence ID" value="AAB29536.2"/>
    <property type="molecule type" value="Genomic_DNA"/>
</dbReference>
<dbReference type="PIR" id="JN0924">
    <property type="entry name" value="JN0924"/>
</dbReference>
<dbReference type="SMR" id="P42930"/>
<dbReference type="BioGRID" id="246632">
    <property type="interactions" value="6"/>
</dbReference>
<dbReference type="FunCoup" id="P42930">
    <property type="interactions" value="626"/>
</dbReference>
<dbReference type="IntAct" id="P42930">
    <property type="interactions" value="4"/>
</dbReference>
<dbReference type="MINT" id="P42930"/>
<dbReference type="STRING" id="10116.ENSRNOP00000032902"/>
<dbReference type="GlyGen" id="P42930">
    <property type="glycosylation" value="2 sites, 1 O-linked glycan (2 sites)"/>
</dbReference>
<dbReference type="iPTMnet" id="P42930"/>
<dbReference type="PhosphoSitePlus" id="P42930"/>
<dbReference type="jPOST" id="P42930"/>
<dbReference type="PaxDb" id="10116-ENSRNOP00000032902"/>
<dbReference type="AGR" id="RGD:61306"/>
<dbReference type="RGD" id="61306">
    <property type="gene designation" value="Hspb1"/>
</dbReference>
<dbReference type="eggNOG" id="KOG3591">
    <property type="taxonomic scope" value="Eukaryota"/>
</dbReference>
<dbReference type="InParanoid" id="P42930"/>
<dbReference type="PhylomeDB" id="P42930"/>
<dbReference type="Reactome" id="R-RNO-4420097">
    <property type="pathway name" value="VEGFA-VEGFR2 Pathway"/>
</dbReference>
<dbReference type="Reactome" id="R-RNO-450408">
    <property type="pathway name" value="AUF1 (hnRNP D0) binds and destabilizes mRNA"/>
</dbReference>
<dbReference type="Reactome" id="R-RNO-5687128">
    <property type="pathway name" value="MAPK6/MAPK4 signaling"/>
</dbReference>
<dbReference type="Reactome" id="R-RNO-9009391">
    <property type="pathway name" value="Extra-nuclear estrogen signaling"/>
</dbReference>
<dbReference type="PRO" id="PR:P42930"/>
<dbReference type="Proteomes" id="UP000002494">
    <property type="component" value="Unplaced"/>
</dbReference>
<dbReference type="GO" id="GO:0030424">
    <property type="term" value="C:axon"/>
    <property type="evidence" value="ECO:0000314"/>
    <property type="project" value="RGD"/>
</dbReference>
<dbReference type="GO" id="GO:1904115">
    <property type="term" value="C:axon cytoplasm"/>
    <property type="evidence" value="ECO:0007669"/>
    <property type="project" value="GOC"/>
</dbReference>
<dbReference type="GO" id="GO:0097512">
    <property type="term" value="C:cardiac myofibril"/>
    <property type="evidence" value="ECO:0000314"/>
    <property type="project" value="RGD"/>
</dbReference>
<dbReference type="GO" id="GO:0043292">
    <property type="term" value="C:contractile muscle fiber"/>
    <property type="evidence" value="ECO:0000266"/>
    <property type="project" value="RGD"/>
</dbReference>
<dbReference type="GO" id="GO:0001533">
    <property type="term" value="C:cornified envelope"/>
    <property type="evidence" value="ECO:0000266"/>
    <property type="project" value="RGD"/>
</dbReference>
<dbReference type="GO" id="GO:0005737">
    <property type="term" value="C:cytoplasm"/>
    <property type="evidence" value="ECO:0000250"/>
    <property type="project" value="UniProtKB"/>
</dbReference>
<dbReference type="GO" id="GO:0030425">
    <property type="term" value="C:dendrite"/>
    <property type="evidence" value="ECO:0000314"/>
    <property type="project" value="RGD"/>
</dbReference>
<dbReference type="GO" id="GO:0031674">
    <property type="term" value="C:I band"/>
    <property type="evidence" value="ECO:0000314"/>
    <property type="project" value="RGD"/>
</dbReference>
<dbReference type="GO" id="GO:0031430">
    <property type="term" value="C:M band"/>
    <property type="evidence" value="ECO:0000314"/>
    <property type="project" value="RGD"/>
</dbReference>
<dbReference type="GO" id="GO:0005634">
    <property type="term" value="C:nucleus"/>
    <property type="evidence" value="ECO:0000250"/>
    <property type="project" value="UniProtKB"/>
</dbReference>
<dbReference type="GO" id="GO:0043204">
    <property type="term" value="C:perikaryon"/>
    <property type="evidence" value="ECO:0000314"/>
    <property type="project" value="RGD"/>
</dbReference>
<dbReference type="GO" id="GO:0005886">
    <property type="term" value="C:plasma membrane"/>
    <property type="evidence" value="ECO:0000266"/>
    <property type="project" value="RGD"/>
</dbReference>
<dbReference type="GO" id="GO:0098839">
    <property type="term" value="C:postsynaptic density membrane"/>
    <property type="evidence" value="ECO:0000314"/>
    <property type="project" value="RGD"/>
</dbReference>
<dbReference type="GO" id="GO:0000502">
    <property type="term" value="C:proteasome complex"/>
    <property type="evidence" value="ECO:0000314"/>
    <property type="project" value="RGD"/>
</dbReference>
<dbReference type="GO" id="GO:0005819">
    <property type="term" value="C:spindle"/>
    <property type="evidence" value="ECO:0007669"/>
    <property type="project" value="UniProtKB-SubCell"/>
</dbReference>
<dbReference type="GO" id="GO:0030018">
    <property type="term" value="C:Z disc"/>
    <property type="evidence" value="ECO:0000266"/>
    <property type="project" value="RGD"/>
</dbReference>
<dbReference type="GO" id="GO:0042802">
    <property type="term" value="F:identical protein binding"/>
    <property type="evidence" value="ECO:0000250"/>
    <property type="project" value="UniProtKB"/>
</dbReference>
<dbReference type="GO" id="GO:0044183">
    <property type="term" value="F:protein folding chaperone"/>
    <property type="evidence" value="ECO:0000250"/>
    <property type="project" value="UniProtKB"/>
</dbReference>
<dbReference type="GO" id="GO:0042803">
    <property type="term" value="F:protein homodimerization activity"/>
    <property type="evidence" value="ECO:0000250"/>
    <property type="project" value="UniProtKB"/>
</dbReference>
<dbReference type="GO" id="GO:0019901">
    <property type="term" value="F:protein kinase binding"/>
    <property type="evidence" value="ECO:0000266"/>
    <property type="project" value="RGD"/>
</dbReference>
<dbReference type="GO" id="GO:0005080">
    <property type="term" value="F:protein kinase C binding"/>
    <property type="evidence" value="ECO:0000266"/>
    <property type="project" value="RGD"/>
</dbReference>
<dbReference type="GO" id="GO:0008426">
    <property type="term" value="F:protein kinase C inhibitor activity"/>
    <property type="evidence" value="ECO:0000266"/>
    <property type="project" value="RGD"/>
</dbReference>
<dbReference type="GO" id="GO:0061629">
    <property type="term" value="F:RNA polymerase II-specific DNA-binding transcription factor binding"/>
    <property type="evidence" value="ECO:0000266"/>
    <property type="project" value="RGD"/>
</dbReference>
<dbReference type="GO" id="GO:0043130">
    <property type="term" value="F:ubiquitin binding"/>
    <property type="evidence" value="ECO:0000314"/>
    <property type="project" value="RGD"/>
</dbReference>
<dbReference type="GO" id="GO:0051082">
    <property type="term" value="F:unfolded protein binding"/>
    <property type="evidence" value="ECO:0000318"/>
    <property type="project" value="GO_Central"/>
</dbReference>
<dbReference type="GO" id="GO:0099641">
    <property type="term" value="P:anterograde axonal protein transport"/>
    <property type="evidence" value="ECO:0000250"/>
    <property type="project" value="UniProtKB"/>
</dbReference>
<dbReference type="GO" id="GO:1903545">
    <property type="term" value="P:cellular response to butyrate"/>
    <property type="evidence" value="ECO:0000270"/>
    <property type="project" value="RGD"/>
</dbReference>
<dbReference type="GO" id="GO:0070301">
    <property type="term" value="P:cellular response to hydrogen peroxide"/>
    <property type="evidence" value="ECO:0000270"/>
    <property type="project" value="RGD"/>
</dbReference>
<dbReference type="GO" id="GO:0071348">
    <property type="term" value="P:cellular response to interleukin-11"/>
    <property type="evidence" value="ECO:0000270"/>
    <property type="project" value="RGD"/>
</dbReference>
<dbReference type="GO" id="GO:0035924">
    <property type="term" value="P:cellular response to vascular endothelial growth factor stimulus"/>
    <property type="evidence" value="ECO:0000266"/>
    <property type="project" value="RGD"/>
</dbReference>
<dbReference type="GO" id="GO:0061077">
    <property type="term" value="P:chaperone-mediated protein folding"/>
    <property type="evidence" value="ECO:0000250"/>
    <property type="project" value="UniProtKB"/>
</dbReference>
<dbReference type="GO" id="GO:0007565">
    <property type="term" value="P:female pregnancy"/>
    <property type="evidence" value="ECO:0000270"/>
    <property type="project" value="RGD"/>
</dbReference>
<dbReference type="GO" id="GO:0035556">
    <property type="term" value="P:intracellular signal transduction"/>
    <property type="evidence" value="ECO:0000266"/>
    <property type="project" value="RGD"/>
</dbReference>
<dbReference type="GO" id="GO:0043066">
    <property type="term" value="P:negative regulation of apoptotic process"/>
    <property type="evidence" value="ECO:0000318"/>
    <property type="project" value="GO_Central"/>
</dbReference>
<dbReference type="GO" id="GO:2001234">
    <property type="term" value="P:negative regulation of apoptotic signaling pathway"/>
    <property type="evidence" value="ECO:0000266"/>
    <property type="project" value="RGD"/>
</dbReference>
<dbReference type="GO" id="GO:1900408">
    <property type="term" value="P:negative regulation of cellular response to oxidative stress"/>
    <property type="evidence" value="ECO:0000315"/>
    <property type="project" value="RGD"/>
</dbReference>
<dbReference type="GO" id="GO:1902176">
    <property type="term" value="P:negative regulation of oxidative stress-induced intrinsic apoptotic signaling pathway"/>
    <property type="evidence" value="ECO:0000266"/>
    <property type="project" value="RGD"/>
</dbReference>
<dbReference type="GO" id="GO:0045590">
    <property type="term" value="P:negative regulation of regulatory T cell differentiation"/>
    <property type="evidence" value="ECO:0000315"/>
    <property type="project" value="RGD"/>
</dbReference>
<dbReference type="GO" id="GO:0045766">
    <property type="term" value="P:positive regulation of angiogenesis"/>
    <property type="evidence" value="ECO:0000266"/>
    <property type="project" value="RGD"/>
</dbReference>
<dbReference type="GO" id="GO:0043536">
    <property type="term" value="P:positive regulation of blood vessel endothelial cell migration"/>
    <property type="evidence" value="ECO:0000266"/>
    <property type="project" value="RGD"/>
</dbReference>
<dbReference type="GO" id="GO:2001028">
    <property type="term" value="P:positive regulation of endothelial cell chemotaxis"/>
    <property type="evidence" value="ECO:0000266"/>
    <property type="project" value="RGD"/>
</dbReference>
<dbReference type="GO" id="GO:0032731">
    <property type="term" value="P:positive regulation of interleukin-1 beta production"/>
    <property type="evidence" value="ECO:0000266"/>
    <property type="project" value="RGD"/>
</dbReference>
<dbReference type="GO" id="GO:0010976">
    <property type="term" value="P:positive regulation of neuron projection development"/>
    <property type="evidence" value="ECO:0000316"/>
    <property type="project" value="ParkinsonsUK-UCL"/>
</dbReference>
<dbReference type="GO" id="GO:0032760">
    <property type="term" value="P:positive regulation of tumor necrosis factor production"/>
    <property type="evidence" value="ECO:0000266"/>
    <property type="project" value="RGD"/>
</dbReference>
<dbReference type="GO" id="GO:0042026">
    <property type="term" value="P:protein refolding"/>
    <property type="evidence" value="ECO:0000318"/>
    <property type="project" value="GO_Central"/>
</dbReference>
<dbReference type="GO" id="GO:0043122">
    <property type="term" value="P:regulation of canonical NF-kappaB signal transduction"/>
    <property type="evidence" value="ECO:0000266"/>
    <property type="project" value="RGD"/>
</dbReference>
<dbReference type="GO" id="GO:0001932">
    <property type="term" value="P:regulation of protein phosphorylation"/>
    <property type="evidence" value="ECO:0000250"/>
    <property type="project" value="UniProtKB"/>
</dbReference>
<dbReference type="GO" id="GO:1990776">
    <property type="term" value="P:response to angiotensin"/>
    <property type="evidence" value="ECO:0000270"/>
    <property type="project" value="RGD"/>
</dbReference>
<dbReference type="GO" id="GO:0009408">
    <property type="term" value="P:response to heat"/>
    <property type="evidence" value="ECO:0000318"/>
    <property type="project" value="GO_Central"/>
</dbReference>
<dbReference type="GO" id="GO:0002931">
    <property type="term" value="P:response to ischemia"/>
    <property type="evidence" value="ECO:0000270"/>
    <property type="project" value="RGD"/>
</dbReference>
<dbReference type="GO" id="GO:0035994">
    <property type="term" value="P:response to muscle stretch"/>
    <property type="evidence" value="ECO:0000270"/>
    <property type="project" value="RGD"/>
</dbReference>
<dbReference type="GO" id="GO:0009615">
    <property type="term" value="P:response to virus"/>
    <property type="evidence" value="ECO:0000266"/>
    <property type="project" value="RGD"/>
</dbReference>
<dbReference type="GO" id="GO:0048010">
    <property type="term" value="P:vascular endothelial growth factor receptor signaling pathway"/>
    <property type="evidence" value="ECO:0000266"/>
    <property type="project" value="RGD"/>
</dbReference>
<dbReference type="CDD" id="cd06475">
    <property type="entry name" value="ACD_HspB1_like"/>
    <property type="match status" value="1"/>
</dbReference>
<dbReference type="FunFam" id="2.60.40.790:FF:000024">
    <property type="entry name" value="heat shock protein beta-1"/>
    <property type="match status" value="1"/>
</dbReference>
<dbReference type="Gene3D" id="2.60.40.790">
    <property type="match status" value="1"/>
</dbReference>
<dbReference type="InterPro" id="IPR002068">
    <property type="entry name" value="A-crystallin/Hsp20_dom"/>
</dbReference>
<dbReference type="InterPro" id="IPR037876">
    <property type="entry name" value="ACD_HspB1"/>
</dbReference>
<dbReference type="InterPro" id="IPR001436">
    <property type="entry name" value="Alpha-crystallin/sHSP_animal"/>
</dbReference>
<dbReference type="InterPro" id="IPR008978">
    <property type="entry name" value="HSP20-like_chaperone"/>
</dbReference>
<dbReference type="PANTHER" id="PTHR45640:SF7">
    <property type="entry name" value="HEAT SHOCK PROTEIN BETA-1"/>
    <property type="match status" value="1"/>
</dbReference>
<dbReference type="PANTHER" id="PTHR45640">
    <property type="entry name" value="HEAT SHOCK PROTEIN HSP-12.2-RELATED"/>
    <property type="match status" value="1"/>
</dbReference>
<dbReference type="Pfam" id="PF00011">
    <property type="entry name" value="HSP20"/>
    <property type="match status" value="1"/>
</dbReference>
<dbReference type="PRINTS" id="PR00299">
    <property type="entry name" value="ACRYSTALLIN"/>
</dbReference>
<dbReference type="SUPFAM" id="SSF49764">
    <property type="entry name" value="HSP20-like chaperones"/>
    <property type="match status" value="1"/>
</dbReference>
<dbReference type="PROSITE" id="PS01031">
    <property type="entry name" value="SHSP"/>
    <property type="match status" value="1"/>
</dbReference>
<proteinExistence type="evidence at protein level"/>
<evidence type="ECO:0000250" key="1">
    <source>
        <dbReference type="UniProtKB" id="P04792"/>
    </source>
</evidence>
<evidence type="ECO:0000255" key="2">
    <source>
        <dbReference type="PROSITE-ProRule" id="PRU00285"/>
    </source>
</evidence>
<evidence type="ECO:0000269" key="3">
    <source>
    </source>
</evidence>
<evidence type="ECO:0000269" key="4">
    <source>
    </source>
</evidence>
<evidence type="ECO:0000269" key="5">
    <source>
    </source>
</evidence>
<evidence type="ECO:0000305" key="6"/>
<evidence type="ECO:0007744" key="7">
    <source>
    </source>
</evidence>
<evidence type="ECO:0007744" key="8">
    <source>
    </source>
</evidence>
<gene>
    <name type="primary">Hspb1</name>
    <name type="synonym">Hsp27</name>
</gene>
<sequence>MTERRVPFSLLRSPSWEPFRDWYPAHSRLFDQAFGVPRFPDEWSQWFSSAGWPGYVRPLPAATAEGPAAVTLARPAFSRALNRQLSSGVSEIRQTADRWRVSLDVNHFAPEELTVKTKEGVVEITGKHEERQDEHGYISRCFTRKYTLPPGVDPTLVSSSLSPEGTLTVEAPLPKAVTQSAEITIPVTFEARAQIGGPESEQSGAK</sequence>